<evidence type="ECO:0000255" key="1">
    <source>
        <dbReference type="HAMAP-Rule" id="MF_00033"/>
    </source>
</evidence>
<gene>
    <name evidence="1" type="primary">murG</name>
    <name type="ordered locus">Ava_2890</name>
</gene>
<accession>Q3M935</accession>
<organism>
    <name type="scientific">Trichormus variabilis (strain ATCC 29413 / PCC 7937)</name>
    <name type="common">Anabaena variabilis</name>
    <dbReference type="NCBI Taxonomy" id="240292"/>
    <lineage>
        <taxon>Bacteria</taxon>
        <taxon>Bacillati</taxon>
        <taxon>Cyanobacteriota</taxon>
        <taxon>Cyanophyceae</taxon>
        <taxon>Nostocales</taxon>
        <taxon>Nostocaceae</taxon>
        <taxon>Trichormus</taxon>
    </lineage>
</organism>
<sequence length="357" mass="37822">MVNAPIKLLIAASGTGGHLFPAIALAEKLPDYEIEWLGVPNRLETQLVPKQYPLNTIAVEGFQQGLGLSSLVILGKLIGSILKVRRLLKQGNFQGVVTTGGYIAGPAVIAARSLGLPVIFHESNALPGKVTRFFGPWCSVVALGFDVAAKYLPRATNVCVGTPVRSQFLNLSNNSQLDLAIPGGVPVIVVFGGSQGAVAVNQLVRQAAPAWFEAGAYVVHLTGDRDPDVDSLKHPQYIELPFYDNMAALLQRASLAISRSGAGSLTELAVCGTPAILIPYPFAAEDHQSYNAEVFTKAGAALSFKQSALTAELLQNQVLNLLQSPPELAKMGENAKAIAVPDSADKLAVLVREVVER</sequence>
<protein>
    <recommendedName>
        <fullName evidence="1">UDP-N-acetylglucosamine--N-acetylmuramyl-(pentapeptide) pyrophosphoryl-undecaprenol N-acetylglucosamine transferase</fullName>
        <ecNumber evidence="1">2.4.1.227</ecNumber>
    </recommendedName>
    <alternativeName>
        <fullName evidence="1">Undecaprenyl-PP-MurNAc-pentapeptide-UDPGlcNAc GlcNAc transferase</fullName>
    </alternativeName>
</protein>
<name>MURG_TRIV2</name>
<keyword id="KW-0131">Cell cycle</keyword>
<keyword id="KW-0132">Cell division</keyword>
<keyword id="KW-0997">Cell inner membrane</keyword>
<keyword id="KW-1003">Cell membrane</keyword>
<keyword id="KW-0133">Cell shape</keyword>
<keyword id="KW-0961">Cell wall biogenesis/degradation</keyword>
<keyword id="KW-0328">Glycosyltransferase</keyword>
<keyword id="KW-0472">Membrane</keyword>
<keyword id="KW-0573">Peptidoglycan synthesis</keyword>
<keyword id="KW-0808">Transferase</keyword>
<proteinExistence type="inferred from homology"/>
<feature type="chain" id="PRO_1000002614" description="UDP-N-acetylglucosamine--N-acetylmuramyl-(pentapeptide) pyrophosphoryl-undecaprenol N-acetylglucosamine transferase">
    <location>
        <begin position="1"/>
        <end position="357"/>
    </location>
</feature>
<feature type="binding site" evidence="1">
    <location>
        <begin position="15"/>
        <end position="17"/>
    </location>
    <ligand>
        <name>UDP-N-acetyl-alpha-D-glucosamine</name>
        <dbReference type="ChEBI" id="CHEBI:57705"/>
    </ligand>
</feature>
<feature type="binding site" evidence="1">
    <location>
        <position position="124"/>
    </location>
    <ligand>
        <name>UDP-N-acetyl-alpha-D-glucosamine</name>
        <dbReference type="ChEBI" id="CHEBI:57705"/>
    </ligand>
</feature>
<feature type="binding site" evidence="1">
    <location>
        <position position="165"/>
    </location>
    <ligand>
        <name>UDP-N-acetyl-alpha-D-glucosamine</name>
        <dbReference type="ChEBI" id="CHEBI:57705"/>
    </ligand>
</feature>
<feature type="binding site" evidence="1">
    <location>
        <position position="194"/>
    </location>
    <ligand>
        <name>UDP-N-acetyl-alpha-D-glucosamine</name>
        <dbReference type="ChEBI" id="CHEBI:57705"/>
    </ligand>
</feature>
<feature type="binding site" evidence="1">
    <location>
        <position position="288"/>
    </location>
    <ligand>
        <name>UDP-N-acetyl-alpha-D-glucosamine</name>
        <dbReference type="ChEBI" id="CHEBI:57705"/>
    </ligand>
</feature>
<reference key="1">
    <citation type="journal article" date="2014" name="Stand. Genomic Sci.">
        <title>Complete genome sequence of Anabaena variabilis ATCC 29413.</title>
        <authorList>
            <person name="Thiel T."/>
            <person name="Pratte B.S."/>
            <person name="Zhong J."/>
            <person name="Goodwin L."/>
            <person name="Copeland A."/>
            <person name="Lucas S."/>
            <person name="Han C."/>
            <person name="Pitluck S."/>
            <person name="Land M.L."/>
            <person name="Kyrpides N.C."/>
            <person name="Woyke T."/>
        </authorList>
    </citation>
    <scope>NUCLEOTIDE SEQUENCE [LARGE SCALE GENOMIC DNA]</scope>
    <source>
        <strain>ATCC 29413 / PCC 7937</strain>
    </source>
</reference>
<comment type="function">
    <text evidence="1">Cell wall formation. Catalyzes the transfer of a GlcNAc subunit on undecaprenyl-pyrophosphoryl-MurNAc-pentapeptide (lipid intermediate I) to form undecaprenyl-pyrophosphoryl-MurNAc-(pentapeptide)GlcNAc (lipid intermediate II).</text>
</comment>
<comment type="catalytic activity">
    <reaction evidence="1">
        <text>di-trans,octa-cis-undecaprenyl diphospho-N-acetyl-alpha-D-muramoyl-L-alanyl-D-glutamyl-meso-2,6-diaminopimeloyl-D-alanyl-D-alanine + UDP-N-acetyl-alpha-D-glucosamine = di-trans,octa-cis-undecaprenyl diphospho-[N-acetyl-alpha-D-glucosaminyl-(1-&gt;4)]-N-acetyl-alpha-D-muramoyl-L-alanyl-D-glutamyl-meso-2,6-diaminopimeloyl-D-alanyl-D-alanine + UDP + H(+)</text>
        <dbReference type="Rhea" id="RHEA:31227"/>
        <dbReference type="ChEBI" id="CHEBI:15378"/>
        <dbReference type="ChEBI" id="CHEBI:57705"/>
        <dbReference type="ChEBI" id="CHEBI:58223"/>
        <dbReference type="ChEBI" id="CHEBI:61387"/>
        <dbReference type="ChEBI" id="CHEBI:61388"/>
        <dbReference type="EC" id="2.4.1.227"/>
    </reaction>
</comment>
<comment type="pathway">
    <text evidence="1">Cell wall biogenesis; peptidoglycan biosynthesis.</text>
</comment>
<comment type="subcellular location">
    <subcellularLocation>
        <location evidence="1">Cell inner membrane</location>
        <topology evidence="1">Peripheral membrane protein</topology>
        <orientation evidence="1">Cytoplasmic side</orientation>
    </subcellularLocation>
</comment>
<comment type="similarity">
    <text evidence="1">Belongs to the glycosyltransferase 28 family. MurG subfamily.</text>
</comment>
<dbReference type="EC" id="2.4.1.227" evidence="1"/>
<dbReference type="EMBL" id="CP000117">
    <property type="protein sequence ID" value="ABA22501.1"/>
    <property type="molecule type" value="Genomic_DNA"/>
</dbReference>
<dbReference type="SMR" id="Q3M935"/>
<dbReference type="STRING" id="240292.Ava_2890"/>
<dbReference type="CAZy" id="GT28">
    <property type="family name" value="Glycosyltransferase Family 28"/>
</dbReference>
<dbReference type="KEGG" id="ava:Ava_2890"/>
<dbReference type="eggNOG" id="COG0707">
    <property type="taxonomic scope" value="Bacteria"/>
</dbReference>
<dbReference type="HOGENOM" id="CLU_037404_0_1_3"/>
<dbReference type="UniPathway" id="UPA00219"/>
<dbReference type="Proteomes" id="UP000002533">
    <property type="component" value="Chromosome"/>
</dbReference>
<dbReference type="GO" id="GO:0005886">
    <property type="term" value="C:plasma membrane"/>
    <property type="evidence" value="ECO:0007669"/>
    <property type="project" value="UniProtKB-SubCell"/>
</dbReference>
<dbReference type="GO" id="GO:0051991">
    <property type="term" value="F:UDP-N-acetyl-D-glucosamine:N-acetylmuramoyl-L-alanyl-D-glutamyl-meso-2,6-diaminopimelyl-D-alanyl-D-alanine-diphosphoundecaprenol 4-beta-N-acetylglucosaminlytransferase activity"/>
    <property type="evidence" value="ECO:0007669"/>
    <property type="project" value="RHEA"/>
</dbReference>
<dbReference type="GO" id="GO:0050511">
    <property type="term" value="F:undecaprenyldiphospho-muramoylpentapeptide beta-N-acetylglucosaminyltransferase activity"/>
    <property type="evidence" value="ECO:0007669"/>
    <property type="project" value="UniProtKB-UniRule"/>
</dbReference>
<dbReference type="GO" id="GO:0005975">
    <property type="term" value="P:carbohydrate metabolic process"/>
    <property type="evidence" value="ECO:0007669"/>
    <property type="project" value="InterPro"/>
</dbReference>
<dbReference type="GO" id="GO:0051301">
    <property type="term" value="P:cell division"/>
    <property type="evidence" value="ECO:0007669"/>
    <property type="project" value="UniProtKB-KW"/>
</dbReference>
<dbReference type="GO" id="GO:0071555">
    <property type="term" value="P:cell wall organization"/>
    <property type="evidence" value="ECO:0007669"/>
    <property type="project" value="UniProtKB-KW"/>
</dbReference>
<dbReference type="GO" id="GO:0030259">
    <property type="term" value="P:lipid glycosylation"/>
    <property type="evidence" value="ECO:0007669"/>
    <property type="project" value="UniProtKB-UniRule"/>
</dbReference>
<dbReference type="GO" id="GO:0009252">
    <property type="term" value="P:peptidoglycan biosynthetic process"/>
    <property type="evidence" value="ECO:0007669"/>
    <property type="project" value="UniProtKB-UniRule"/>
</dbReference>
<dbReference type="GO" id="GO:0008360">
    <property type="term" value="P:regulation of cell shape"/>
    <property type="evidence" value="ECO:0007669"/>
    <property type="project" value="UniProtKB-KW"/>
</dbReference>
<dbReference type="CDD" id="cd03785">
    <property type="entry name" value="GT28_MurG"/>
    <property type="match status" value="1"/>
</dbReference>
<dbReference type="Gene3D" id="3.40.50.2000">
    <property type="entry name" value="Glycogen Phosphorylase B"/>
    <property type="match status" value="2"/>
</dbReference>
<dbReference type="HAMAP" id="MF_00033">
    <property type="entry name" value="MurG"/>
    <property type="match status" value="1"/>
</dbReference>
<dbReference type="InterPro" id="IPR006009">
    <property type="entry name" value="GlcNAc_MurG"/>
</dbReference>
<dbReference type="InterPro" id="IPR007235">
    <property type="entry name" value="Glyco_trans_28_C"/>
</dbReference>
<dbReference type="InterPro" id="IPR004276">
    <property type="entry name" value="GlycoTrans_28_N"/>
</dbReference>
<dbReference type="NCBIfam" id="TIGR01133">
    <property type="entry name" value="murG"/>
    <property type="match status" value="1"/>
</dbReference>
<dbReference type="PANTHER" id="PTHR21015:SF22">
    <property type="entry name" value="GLYCOSYLTRANSFERASE"/>
    <property type="match status" value="1"/>
</dbReference>
<dbReference type="PANTHER" id="PTHR21015">
    <property type="entry name" value="UDP-N-ACETYLGLUCOSAMINE--N-ACETYLMURAMYL-(PENTAPEPTIDE) PYROPHOSPHORYL-UNDECAPRENOL N-ACETYLGLUCOSAMINE TRANSFERASE 1"/>
    <property type="match status" value="1"/>
</dbReference>
<dbReference type="Pfam" id="PF04101">
    <property type="entry name" value="Glyco_tran_28_C"/>
    <property type="match status" value="1"/>
</dbReference>
<dbReference type="Pfam" id="PF03033">
    <property type="entry name" value="Glyco_transf_28"/>
    <property type="match status" value="1"/>
</dbReference>
<dbReference type="SUPFAM" id="SSF53756">
    <property type="entry name" value="UDP-Glycosyltransferase/glycogen phosphorylase"/>
    <property type="match status" value="1"/>
</dbReference>